<protein>
    <recommendedName>
        <fullName evidence="1">7-methyl-GTP pyrophosphatase</fullName>
        <shortName evidence="1">m(7)GTP pyrophosphatase</shortName>
        <ecNumber evidence="1">3.6.1.-</ecNumber>
    </recommendedName>
</protein>
<organism>
    <name type="scientific">Albidiferax ferrireducens (strain ATCC BAA-621 / DSM 15236 / T118)</name>
    <name type="common">Rhodoferax ferrireducens</name>
    <dbReference type="NCBI Taxonomy" id="338969"/>
    <lineage>
        <taxon>Bacteria</taxon>
        <taxon>Pseudomonadati</taxon>
        <taxon>Pseudomonadota</taxon>
        <taxon>Betaproteobacteria</taxon>
        <taxon>Burkholderiales</taxon>
        <taxon>Comamonadaceae</taxon>
        <taxon>Rhodoferax</taxon>
    </lineage>
</organism>
<name>NTPPB_ALBFT</name>
<sequence length="199" mass="21195">MSEPIQRKLILGSTSPYRRELLARLRIPFEVAAPDVDESARAGETPQQLACRLAMAKARAVAAQFPSCVVVGSDQVAELDGQALGKPGNHARAVAQLQQMRGKSVIFQTAVAVVCVETGFAQMDLAQVKVNFRQLSDAEIEAYLRAETPYDCAGSAKSEGLGIALLDSIDNDDPTALVGLPMIRTCRMIQAAGIKVLGA</sequence>
<gene>
    <name type="ordered locus">Rfer_1726</name>
</gene>
<proteinExistence type="inferred from homology"/>
<dbReference type="EC" id="3.6.1.-" evidence="1"/>
<dbReference type="EMBL" id="CP000267">
    <property type="protein sequence ID" value="ABD69455.1"/>
    <property type="molecule type" value="Genomic_DNA"/>
</dbReference>
<dbReference type="RefSeq" id="WP_011464023.1">
    <property type="nucleotide sequence ID" value="NC_007908.1"/>
</dbReference>
<dbReference type="SMR" id="Q21XP8"/>
<dbReference type="STRING" id="338969.Rfer_1726"/>
<dbReference type="KEGG" id="rfr:Rfer_1726"/>
<dbReference type="eggNOG" id="COG0424">
    <property type="taxonomic scope" value="Bacteria"/>
</dbReference>
<dbReference type="HOGENOM" id="CLU_040416_1_0_4"/>
<dbReference type="OrthoDB" id="9813694at2"/>
<dbReference type="Proteomes" id="UP000008332">
    <property type="component" value="Chromosome"/>
</dbReference>
<dbReference type="GO" id="GO:0005737">
    <property type="term" value="C:cytoplasm"/>
    <property type="evidence" value="ECO:0007669"/>
    <property type="project" value="UniProtKB-SubCell"/>
</dbReference>
<dbReference type="GO" id="GO:0047429">
    <property type="term" value="F:nucleoside triphosphate diphosphatase activity"/>
    <property type="evidence" value="ECO:0007669"/>
    <property type="project" value="InterPro"/>
</dbReference>
<dbReference type="GO" id="GO:0009117">
    <property type="term" value="P:nucleotide metabolic process"/>
    <property type="evidence" value="ECO:0007669"/>
    <property type="project" value="UniProtKB-KW"/>
</dbReference>
<dbReference type="CDD" id="cd00555">
    <property type="entry name" value="Maf"/>
    <property type="match status" value="1"/>
</dbReference>
<dbReference type="FunFam" id="3.90.950.10:FF:000005">
    <property type="entry name" value="7-methyl-GTP pyrophosphatase"/>
    <property type="match status" value="1"/>
</dbReference>
<dbReference type="Gene3D" id="3.90.950.10">
    <property type="match status" value="1"/>
</dbReference>
<dbReference type="HAMAP" id="MF_00528">
    <property type="entry name" value="Maf"/>
    <property type="match status" value="1"/>
</dbReference>
<dbReference type="InterPro" id="IPR029001">
    <property type="entry name" value="ITPase-like_fam"/>
</dbReference>
<dbReference type="InterPro" id="IPR003697">
    <property type="entry name" value="Maf-like"/>
</dbReference>
<dbReference type="NCBIfam" id="TIGR00172">
    <property type="entry name" value="maf"/>
    <property type="match status" value="1"/>
</dbReference>
<dbReference type="PANTHER" id="PTHR43213:SF10">
    <property type="entry name" value="7-METHYL-GTP PYROPHOSPHATASE"/>
    <property type="match status" value="1"/>
</dbReference>
<dbReference type="PANTHER" id="PTHR43213">
    <property type="entry name" value="BIFUNCTIONAL DTTP/UTP PYROPHOSPHATASE/METHYLTRANSFERASE PROTEIN-RELATED"/>
    <property type="match status" value="1"/>
</dbReference>
<dbReference type="Pfam" id="PF02545">
    <property type="entry name" value="Maf"/>
    <property type="match status" value="1"/>
</dbReference>
<dbReference type="PIRSF" id="PIRSF006305">
    <property type="entry name" value="Maf"/>
    <property type="match status" value="1"/>
</dbReference>
<dbReference type="SUPFAM" id="SSF52972">
    <property type="entry name" value="ITPase-like"/>
    <property type="match status" value="1"/>
</dbReference>
<keyword id="KW-0963">Cytoplasm</keyword>
<keyword id="KW-0378">Hydrolase</keyword>
<keyword id="KW-0546">Nucleotide metabolism</keyword>
<keyword id="KW-1185">Reference proteome</keyword>
<evidence type="ECO:0000255" key="1">
    <source>
        <dbReference type="HAMAP-Rule" id="MF_00528"/>
    </source>
</evidence>
<comment type="function">
    <text evidence="1">Nucleoside triphosphate pyrophosphatase that hydrolyzes 7-methyl-GTP (m(7)GTP). May have a dual role in cell division arrest and in preventing the incorporation of modified nucleotides into cellular nucleic acids.</text>
</comment>
<comment type="catalytic activity">
    <reaction evidence="1">
        <text>N(7)-methyl-GTP + H2O = N(7)-methyl-GMP + diphosphate + H(+)</text>
        <dbReference type="Rhea" id="RHEA:58744"/>
        <dbReference type="ChEBI" id="CHEBI:15377"/>
        <dbReference type="ChEBI" id="CHEBI:15378"/>
        <dbReference type="ChEBI" id="CHEBI:33019"/>
        <dbReference type="ChEBI" id="CHEBI:58285"/>
        <dbReference type="ChEBI" id="CHEBI:87133"/>
    </reaction>
</comment>
<comment type="cofactor">
    <cofactor evidence="1">
        <name>a divalent metal cation</name>
        <dbReference type="ChEBI" id="CHEBI:60240"/>
    </cofactor>
</comment>
<comment type="subcellular location">
    <subcellularLocation>
        <location evidence="1">Cytoplasm</location>
    </subcellularLocation>
</comment>
<comment type="similarity">
    <text evidence="1">Belongs to the Maf family. YceF subfamily.</text>
</comment>
<accession>Q21XP8</accession>
<feature type="chain" id="PRO_0000267398" description="7-methyl-GTP pyrophosphatase">
    <location>
        <begin position="1"/>
        <end position="199"/>
    </location>
</feature>
<feature type="active site" description="Proton acceptor" evidence="1">
    <location>
        <position position="74"/>
    </location>
</feature>
<feature type="site" description="Important for substrate specificity" evidence="1">
    <location>
        <position position="17"/>
    </location>
</feature>
<feature type="site" description="Important for substrate specificity" evidence="1">
    <location>
        <position position="75"/>
    </location>
</feature>
<feature type="site" description="Important for substrate specificity" evidence="1">
    <location>
        <position position="159"/>
    </location>
</feature>
<reference key="1">
    <citation type="submission" date="2006-02" db="EMBL/GenBank/DDBJ databases">
        <title>Complete sequence of chromosome of Rhodoferax ferrireducens DSM 15236.</title>
        <authorList>
            <person name="Copeland A."/>
            <person name="Lucas S."/>
            <person name="Lapidus A."/>
            <person name="Barry K."/>
            <person name="Detter J.C."/>
            <person name="Glavina del Rio T."/>
            <person name="Hammon N."/>
            <person name="Israni S."/>
            <person name="Pitluck S."/>
            <person name="Brettin T."/>
            <person name="Bruce D."/>
            <person name="Han C."/>
            <person name="Tapia R."/>
            <person name="Gilna P."/>
            <person name="Kiss H."/>
            <person name="Schmutz J."/>
            <person name="Larimer F."/>
            <person name="Land M."/>
            <person name="Kyrpides N."/>
            <person name="Ivanova N."/>
            <person name="Richardson P."/>
        </authorList>
    </citation>
    <scope>NUCLEOTIDE SEQUENCE [LARGE SCALE GENOMIC DNA]</scope>
    <source>
        <strain>ATCC BAA-621 / DSM 15236 / T118</strain>
    </source>
</reference>